<reference key="1">
    <citation type="journal article" date="1991" name="FEBS Lett.">
        <title>Expression of the envelope antigen F1 of Yersinia pestis is mediated by the product of caf1M gene having homology with the chaperone protein PapD of Escherichia coli.</title>
        <authorList>
            <person name="Galyov E.E."/>
            <person name="Karlishev A.V."/>
            <person name="Chernovskaya T.V."/>
            <person name="Dolgikh D.A."/>
            <person name="Smirnov O.Y."/>
            <person name="Volkovoy K.I."/>
            <person name="Abramov V.M."/>
            <person name="Zav'Yalov V.P."/>
        </authorList>
    </citation>
    <scope>NUCLEOTIDE SEQUENCE [GENOMIC DNA]</scope>
    <source>
        <plasmid>pFra</plasmid>
    </source>
</reference>
<reference key="2">
    <citation type="journal article" date="1992" name="FEBS Lett.">
        <title>Caf1R gene and its role in the regulation of capsule formation of Y. pestis.</title>
        <authorList>
            <person name="Karlyshev A.V."/>
            <person name="Galyov E.E."/>
            <person name="Abramov V.M."/>
            <person name="Zav'Yalov V.P."/>
        </authorList>
    </citation>
    <scope>NUCLEOTIDE SEQUENCE [GENOMIC DNA]</scope>
    <source>
        <plasmid>pFra</plasmid>
    </source>
</reference>
<reference key="3">
    <citation type="journal article" date="1998" name="J. Bacteriol.">
        <title>Structural organization of virulence-associated plasmids of Yersinia pestis.</title>
        <authorList>
            <person name="Hu P."/>
            <person name="Elliott J."/>
            <person name="McCready P."/>
            <person name="Skowronski E."/>
            <person name="Garnes J."/>
            <person name="Kobayashi A."/>
            <person name="Brubaker R.R."/>
            <person name="Garcia E."/>
        </authorList>
    </citation>
    <scope>NUCLEOTIDE SEQUENCE [GENOMIC DNA]</scope>
    <source>
        <strain>KIM5 / Biovar Mediaevalis</strain>
        <plasmid>pMT1 (pMT-1)</plasmid>
    </source>
</reference>
<reference key="4">
    <citation type="journal article" date="1998" name="Infect. Immun.">
        <title>Complete DNA sequence and detailed analysis of the Yersinia pestis KIM5 plasmid encoding murine toxin and capsular antigen.</title>
        <authorList>
            <person name="Lindler L.E."/>
            <person name="Plano G.V."/>
            <person name="Burland V."/>
            <person name="Mayhew G.F."/>
            <person name="Blattner F.R."/>
        </authorList>
    </citation>
    <scope>NUCLEOTIDE SEQUENCE [LARGE SCALE GENOMIC DNA]</scope>
    <source>
        <strain>KIM10+ / Biovar Mediaevalis</strain>
        <plasmid>pMT1 (pMT-1)</plasmid>
    </source>
</reference>
<reference key="5">
    <citation type="journal article" date="2001" name="Nature">
        <title>Genome sequence of Yersinia pestis, the causative agent of plague.</title>
        <authorList>
            <person name="Parkhill J."/>
            <person name="Wren B.W."/>
            <person name="Thomson N.R."/>
            <person name="Titball R.W."/>
            <person name="Holden M.T.G."/>
            <person name="Prentice M.B."/>
            <person name="Sebaihia M."/>
            <person name="James K.D."/>
            <person name="Churcher C.M."/>
            <person name="Mungall K.L."/>
            <person name="Baker S."/>
            <person name="Basham D."/>
            <person name="Bentley S.D."/>
            <person name="Brooks K."/>
            <person name="Cerdeno-Tarraga A.-M."/>
            <person name="Chillingworth T."/>
            <person name="Cronin A."/>
            <person name="Davies R.M."/>
            <person name="Davis P."/>
            <person name="Dougan G."/>
            <person name="Feltwell T."/>
            <person name="Hamlin N."/>
            <person name="Holroyd S."/>
            <person name="Jagels K."/>
            <person name="Karlyshev A.V."/>
            <person name="Leather S."/>
            <person name="Moule S."/>
            <person name="Oyston P.C.F."/>
            <person name="Quail M.A."/>
            <person name="Rutherford K.M."/>
            <person name="Simmonds M."/>
            <person name="Skelton J."/>
            <person name="Stevens K."/>
            <person name="Whitehead S."/>
            <person name="Barrell B.G."/>
        </authorList>
    </citation>
    <scope>NUCLEOTIDE SEQUENCE [LARGE SCALE GENOMIC DNA]</scope>
    <source>
        <strain>CO-92 / Biovar Orientalis</strain>
        <plasmid>pMT1 (pMT-1)</plasmid>
    </source>
</reference>
<reference key="6">
    <citation type="journal article" date="2004" name="DNA Res.">
        <title>Complete genome sequence of Yersinia pestis strain 91001, an isolate avirulent to humans.</title>
        <authorList>
            <person name="Song Y."/>
            <person name="Tong Z."/>
            <person name="Wang J."/>
            <person name="Wang L."/>
            <person name="Guo Z."/>
            <person name="Han Y."/>
            <person name="Zhang J."/>
            <person name="Pei D."/>
            <person name="Zhou D."/>
            <person name="Qin H."/>
            <person name="Pang X."/>
            <person name="Han Y."/>
            <person name="Zhai J."/>
            <person name="Li M."/>
            <person name="Cui B."/>
            <person name="Qi Z."/>
            <person name="Jin L."/>
            <person name="Dai R."/>
            <person name="Chen F."/>
            <person name="Li S."/>
            <person name="Ye C."/>
            <person name="Du Z."/>
            <person name="Lin W."/>
            <person name="Wang J."/>
            <person name="Yu J."/>
            <person name="Yang H."/>
            <person name="Wang J."/>
            <person name="Huang P."/>
            <person name="Yang R."/>
        </authorList>
    </citation>
    <scope>NUCLEOTIDE SEQUENCE [LARGE SCALE GENOMIC DNA]</scope>
    <source>
        <strain>91001 / Biovar Mediaevalis</strain>
        <plasmid>pMT1 (pMT-1)</plasmid>
    </source>
</reference>
<evidence type="ECO:0000255" key="1">
    <source>
        <dbReference type="PROSITE-ProRule" id="PRU00593"/>
    </source>
</evidence>
<evidence type="ECO:0000305" key="2"/>
<protein>
    <recommendedName>
        <fullName>F1 operon positive regulatory protein</fullName>
    </recommendedName>
</protein>
<gene>
    <name type="primary">caf1R</name>
    <name type="ordered locus">YPMT1.81c</name>
    <name type="ordered locus">Y1097</name>
    <name type="ordered locus">YP_pMT085</name>
</gene>
<name>CAF1R_YERPE</name>
<proteinExistence type="predicted"/>
<keyword id="KW-0010">Activator</keyword>
<keyword id="KW-0238">DNA-binding</keyword>
<keyword id="KW-0614">Plasmid</keyword>
<keyword id="KW-1185">Reference proteome</keyword>
<keyword id="KW-0804">Transcription</keyword>
<keyword id="KW-0805">Transcription regulation</keyword>
<organism>
    <name type="scientific">Yersinia pestis</name>
    <dbReference type="NCBI Taxonomy" id="632"/>
    <lineage>
        <taxon>Bacteria</taxon>
        <taxon>Pseudomonadati</taxon>
        <taxon>Pseudomonadota</taxon>
        <taxon>Gammaproteobacteria</taxon>
        <taxon>Enterobacterales</taxon>
        <taxon>Yersiniaceae</taxon>
        <taxon>Yersinia</taxon>
    </lineage>
</organism>
<feature type="chain" id="PRO_0000194505" description="F1 operon positive regulatory protein">
    <location>
        <begin position="1"/>
        <end position="301"/>
    </location>
</feature>
<feature type="domain" description="HTH araC/xylS-type" evidence="1">
    <location>
        <begin position="8"/>
        <end position="107"/>
    </location>
</feature>
<feature type="DNA-binding region" description="H-T-H motif" evidence="1">
    <location>
        <begin position="26"/>
        <end position="47"/>
    </location>
</feature>
<feature type="DNA-binding region" description="H-T-H motif" evidence="1">
    <location>
        <begin position="74"/>
        <end position="97"/>
    </location>
</feature>
<feature type="sequence conflict" description="In Ref. 1." evidence="2" ref="1">
    <original>E</original>
    <variation>V</variation>
    <location>
        <position position="124"/>
    </location>
</feature>
<feature type="sequence conflict" description="In Ref. 1." evidence="2" ref="1">
    <original>E</original>
    <variation>V</variation>
    <location>
        <position position="135"/>
    </location>
</feature>
<dbReference type="EMBL" id="X61996">
    <property type="protein sequence ID" value="CAA43969.1"/>
    <property type="molecule type" value="Genomic_DNA"/>
</dbReference>
<dbReference type="EMBL" id="AF074611">
    <property type="protein sequence ID" value="AAC82755.1"/>
    <property type="status" value="ALT_INIT"/>
    <property type="molecule type" value="Genomic_DNA"/>
</dbReference>
<dbReference type="EMBL" id="AF053947">
    <property type="protein sequence ID" value="AAC13221.1"/>
    <property type="molecule type" value="Genomic_DNA"/>
</dbReference>
<dbReference type="EMBL" id="AL117211">
    <property type="protein sequence ID" value="CAB55263.1"/>
    <property type="status" value="ALT_INIT"/>
    <property type="molecule type" value="Genomic_DNA"/>
</dbReference>
<dbReference type="EMBL" id="AE017045">
    <property type="protein sequence ID" value="AAS58717.1"/>
    <property type="status" value="ALT_INIT"/>
    <property type="molecule type" value="Genomic_DNA"/>
</dbReference>
<dbReference type="PIR" id="S19097">
    <property type="entry name" value="S19097"/>
</dbReference>
<dbReference type="PIR" id="T14705">
    <property type="entry name" value="T14705"/>
</dbReference>
<dbReference type="PIR" id="T15012">
    <property type="entry name" value="T15012"/>
</dbReference>
<dbReference type="RefSeq" id="NP_395427.1">
    <property type="nucleotide sequence ID" value="NC_003134.1"/>
</dbReference>
<dbReference type="RefSeq" id="NP_857695.1">
    <property type="nucleotide sequence ID" value="NC_004835.1"/>
</dbReference>
<dbReference type="RefSeq" id="WP_002211761.1">
    <property type="nucleotide sequence ID" value="NZ_WUCM01000058.1"/>
</dbReference>
<dbReference type="SMR" id="P26950"/>
<dbReference type="DNASU" id="1149241"/>
<dbReference type="EnsemblBacteria" id="AAS58717">
    <property type="protein sequence ID" value="AAS58717"/>
    <property type="gene ID" value="YP_pMT085"/>
</dbReference>
<dbReference type="GeneID" id="57977633"/>
<dbReference type="KEGG" id="ype:YPMT1.81c"/>
<dbReference type="KEGG" id="ypk:caf1R.pl"/>
<dbReference type="KEGG" id="ypm:YP_pMT085"/>
<dbReference type="PATRIC" id="fig|214092.21.peg.209"/>
<dbReference type="HOGENOM" id="CLU_000445_81_1_6"/>
<dbReference type="PRO" id="PR:P26950"/>
<dbReference type="Proteomes" id="UP000000815">
    <property type="component" value="Plasmid pMT1"/>
</dbReference>
<dbReference type="Proteomes" id="UP000001019">
    <property type="component" value="Plasmid pMT1"/>
</dbReference>
<dbReference type="Proteomes" id="UP000002490">
    <property type="component" value="Plasmid pMT-1"/>
</dbReference>
<dbReference type="GO" id="GO:0005829">
    <property type="term" value="C:cytosol"/>
    <property type="evidence" value="ECO:0000318"/>
    <property type="project" value="GO_Central"/>
</dbReference>
<dbReference type="GO" id="GO:0001108">
    <property type="term" value="F:bacterial-type RNA polymerase holo enzyme binding"/>
    <property type="evidence" value="ECO:0000318"/>
    <property type="project" value="GO_Central"/>
</dbReference>
<dbReference type="GO" id="GO:0003700">
    <property type="term" value="F:DNA-binding transcription factor activity"/>
    <property type="evidence" value="ECO:0007669"/>
    <property type="project" value="InterPro"/>
</dbReference>
<dbReference type="GO" id="GO:0043565">
    <property type="term" value="F:sequence-specific DNA binding"/>
    <property type="evidence" value="ECO:0000318"/>
    <property type="project" value="GO_Central"/>
</dbReference>
<dbReference type="GO" id="GO:0006355">
    <property type="term" value="P:regulation of DNA-templated transcription"/>
    <property type="evidence" value="ECO:0000318"/>
    <property type="project" value="GO_Central"/>
</dbReference>
<dbReference type="Gene3D" id="1.10.10.60">
    <property type="entry name" value="Homeodomain-like"/>
    <property type="match status" value="2"/>
</dbReference>
<dbReference type="Gene3D" id="3.20.80.10">
    <property type="entry name" value="Regulatory factor, effector binding domain"/>
    <property type="match status" value="1"/>
</dbReference>
<dbReference type="InterPro" id="IPR029442">
    <property type="entry name" value="GyrI-like"/>
</dbReference>
<dbReference type="InterPro" id="IPR009057">
    <property type="entry name" value="Homeodomain-like_sf"/>
</dbReference>
<dbReference type="InterPro" id="IPR018060">
    <property type="entry name" value="HTH_AraC"/>
</dbReference>
<dbReference type="InterPro" id="IPR018062">
    <property type="entry name" value="HTH_AraC-typ_CS"/>
</dbReference>
<dbReference type="InterPro" id="IPR050959">
    <property type="entry name" value="MarA-like"/>
</dbReference>
<dbReference type="InterPro" id="IPR011256">
    <property type="entry name" value="Reg_factor_effector_dom_sf"/>
</dbReference>
<dbReference type="InterPro" id="IPR020449">
    <property type="entry name" value="Tscrpt_reg_AraC-type_HTH"/>
</dbReference>
<dbReference type="PANTHER" id="PTHR47504:SF3">
    <property type="entry name" value="HTH-TYPE TRANSCRIPTIONAL REGULATOR YKGA-RELATED"/>
    <property type="match status" value="1"/>
</dbReference>
<dbReference type="PANTHER" id="PTHR47504">
    <property type="entry name" value="RIGHT ORIGIN-BINDING PROTEIN"/>
    <property type="match status" value="1"/>
</dbReference>
<dbReference type="Pfam" id="PF06445">
    <property type="entry name" value="GyrI-like"/>
    <property type="match status" value="1"/>
</dbReference>
<dbReference type="Pfam" id="PF12833">
    <property type="entry name" value="HTH_18"/>
    <property type="match status" value="1"/>
</dbReference>
<dbReference type="PRINTS" id="PR00032">
    <property type="entry name" value="HTHARAC"/>
</dbReference>
<dbReference type="SMART" id="SM00342">
    <property type="entry name" value="HTH_ARAC"/>
    <property type="match status" value="1"/>
</dbReference>
<dbReference type="SUPFAM" id="SSF46689">
    <property type="entry name" value="Homeodomain-like"/>
    <property type="match status" value="1"/>
</dbReference>
<dbReference type="SUPFAM" id="SSF55136">
    <property type="entry name" value="Probable bacterial effector-binding domain"/>
    <property type="match status" value="1"/>
</dbReference>
<dbReference type="PROSITE" id="PS00041">
    <property type="entry name" value="HTH_ARAC_FAMILY_1"/>
    <property type="match status" value="1"/>
</dbReference>
<dbReference type="PROSITE" id="PS01124">
    <property type="entry name" value="HTH_ARAC_FAMILY_2"/>
    <property type="match status" value="1"/>
</dbReference>
<accession>P26950</accession>
<accession>Q9R376</accession>
<sequence length="301" mass="36054">MLKQMTVNSIIQYIEENLESKFINIDCLVLYSGFSRRYLQISFKEYVGMPIGTYIRVRRASRAAALLRLTRLTIIEISAKLFYDSQQTFTREFKKIFGYTPRQYRMIPFWSFKGLLGRREINCEYLQPRICYLKERNIIGQCFNFRDLVFYSGIDSKCRLGKLYDSLKKNTAITVSNRIPFHDKTNDIIARTVVWDRNKHFSDSEIKVDKGLYAYFFFNDTYDQYVHHMYNIYYNSLPIYNLNKRDGYDVEVIKRRNDNTIDCHYFLPIYCDDMEFYNEMQVYHNNIVKPEMSVTLGLPKS</sequence>
<comment type="function">
    <text>Positive regulator of F1 operon expression.</text>
</comment>
<comment type="sequence caution" evidence="2">
    <conflict type="erroneous initiation">
        <sequence resource="EMBL-CDS" id="AAC82755"/>
    </conflict>
</comment>
<comment type="sequence caution" evidence="2">
    <conflict type="erroneous initiation">
        <sequence resource="EMBL-CDS" id="AAS58717"/>
    </conflict>
</comment>
<comment type="sequence caution" evidence="2">
    <conflict type="erroneous initiation">
        <sequence resource="EMBL-CDS" id="CAB55263"/>
    </conflict>
</comment>
<geneLocation type="plasmid">
    <name>pMT1</name>
    <name>pMT-1</name>
</geneLocation>
<geneLocation type="plasmid">
    <name>pFra</name>
</geneLocation>